<evidence type="ECO:0000255" key="1">
    <source>
        <dbReference type="HAMAP-Rule" id="MF_00373"/>
    </source>
</evidence>
<evidence type="ECO:0000305" key="2"/>
<reference key="1">
    <citation type="journal article" date="2007" name="Nat. Biotechnol.">
        <title>Complete genome sequence of the fish pathogen Flavobacterium psychrophilum.</title>
        <authorList>
            <person name="Duchaud E."/>
            <person name="Boussaha M."/>
            <person name="Loux V."/>
            <person name="Bernardet J.-F."/>
            <person name="Michel C."/>
            <person name="Kerouault B."/>
            <person name="Mondot S."/>
            <person name="Nicolas P."/>
            <person name="Bossy R."/>
            <person name="Caron C."/>
            <person name="Bessieres P."/>
            <person name="Gibrat J.-F."/>
            <person name="Claverol S."/>
            <person name="Dumetz F."/>
            <person name="Le Henaff M."/>
            <person name="Benmansour A."/>
        </authorList>
    </citation>
    <scope>NUCLEOTIDE SEQUENCE [LARGE SCALE GENOMIC DNA]</scope>
    <source>
        <strain>ATCC 49511 / DSM 21280 / CIP 103535 / JIP02/86</strain>
    </source>
</reference>
<sequence length="78" mass="8868">MSRICDLTGKRAMVGNNVSHAMNKTKRKFSVNLIKKRFYLPEEDRWITLRVAASTIKTINKNGISAVLKKAQTEGFIK</sequence>
<organism>
    <name type="scientific">Flavobacterium psychrophilum (strain ATCC 49511 / DSM 21280 / CIP 103535 / JIP02/86)</name>
    <dbReference type="NCBI Taxonomy" id="402612"/>
    <lineage>
        <taxon>Bacteria</taxon>
        <taxon>Pseudomonadati</taxon>
        <taxon>Bacteroidota</taxon>
        <taxon>Flavobacteriia</taxon>
        <taxon>Flavobacteriales</taxon>
        <taxon>Flavobacteriaceae</taxon>
        <taxon>Flavobacterium</taxon>
    </lineage>
</organism>
<accession>A6GZI6</accession>
<proteinExistence type="inferred from homology"/>
<keyword id="KW-1185">Reference proteome</keyword>
<keyword id="KW-0687">Ribonucleoprotein</keyword>
<keyword id="KW-0689">Ribosomal protein</keyword>
<dbReference type="EMBL" id="AM398681">
    <property type="protein sequence ID" value="CAL43509.1"/>
    <property type="molecule type" value="Genomic_DNA"/>
</dbReference>
<dbReference type="RefSeq" id="WP_011963554.1">
    <property type="nucleotide sequence ID" value="NC_009613.3"/>
</dbReference>
<dbReference type="RefSeq" id="YP_001296318.1">
    <property type="nucleotide sequence ID" value="NC_009613.3"/>
</dbReference>
<dbReference type="SMR" id="A6GZI6"/>
<dbReference type="STRING" id="402612.FP1433"/>
<dbReference type="EnsemblBacteria" id="CAL43509">
    <property type="protein sequence ID" value="CAL43509"/>
    <property type="gene ID" value="FP1433"/>
</dbReference>
<dbReference type="GeneID" id="66552892"/>
<dbReference type="KEGG" id="fps:FP1433"/>
<dbReference type="PATRIC" id="fig|402612.5.peg.1448"/>
<dbReference type="eggNOG" id="COG0227">
    <property type="taxonomic scope" value="Bacteria"/>
</dbReference>
<dbReference type="HOGENOM" id="CLU_064548_3_1_10"/>
<dbReference type="OrthoDB" id="9805609at2"/>
<dbReference type="Proteomes" id="UP000006394">
    <property type="component" value="Chromosome"/>
</dbReference>
<dbReference type="GO" id="GO:1990904">
    <property type="term" value="C:ribonucleoprotein complex"/>
    <property type="evidence" value="ECO:0007669"/>
    <property type="project" value="UniProtKB-KW"/>
</dbReference>
<dbReference type="GO" id="GO:0005840">
    <property type="term" value="C:ribosome"/>
    <property type="evidence" value="ECO:0007669"/>
    <property type="project" value="UniProtKB-KW"/>
</dbReference>
<dbReference type="GO" id="GO:0003735">
    <property type="term" value="F:structural constituent of ribosome"/>
    <property type="evidence" value="ECO:0007669"/>
    <property type="project" value="InterPro"/>
</dbReference>
<dbReference type="GO" id="GO:0006412">
    <property type="term" value="P:translation"/>
    <property type="evidence" value="ECO:0007669"/>
    <property type="project" value="UniProtKB-UniRule"/>
</dbReference>
<dbReference type="FunFam" id="2.30.170.40:FF:000001">
    <property type="entry name" value="50S ribosomal protein L28"/>
    <property type="match status" value="1"/>
</dbReference>
<dbReference type="Gene3D" id="2.30.170.40">
    <property type="entry name" value="Ribosomal protein L28/L24"/>
    <property type="match status" value="1"/>
</dbReference>
<dbReference type="HAMAP" id="MF_00373">
    <property type="entry name" value="Ribosomal_bL28"/>
    <property type="match status" value="1"/>
</dbReference>
<dbReference type="InterPro" id="IPR026569">
    <property type="entry name" value="Ribosomal_bL28"/>
</dbReference>
<dbReference type="InterPro" id="IPR034704">
    <property type="entry name" value="Ribosomal_bL28/bL31-like_sf"/>
</dbReference>
<dbReference type="InterPro" id="IPR001383">
    <property type="entry name" value="Ribosomal_bL28_bact-type"/>
</dbReference>
<dbReference type="InterPro" id="IPR037147">
    <property type="entry name" value="Ribosomal_bL28_sf"/>
</dbReference>
<dbReference type="NCBIfam" id="TIGR00009">
    <property type="entry name" value="L28"/>
    <property type="match status" value="1"/>
</dbReference>
<dbReference type="PANTHER" id="PTHR13528">
    <property type="entry name" value="39S RIBOSOMAL PROTEIN L28, MITOCHONDRIAL"/>
    <property type="match status" value="1"/>
</dbReference>
<dbReference type="PANTHER" id="PTHR13528:SF2">
    <property type="entry name" value="LARGE RIBOSOMAL SUBUNIT PROTEIN BL28M"/>
    <property type="match status" value="1"/>
</dbReference>
<dbReference type="Pfam" id="PF00830">
    <property type="entry name" value="Ribosomal_L28"/>
    <property type="match status" value="1"/>
</dbReference>
<dbReference type="SUPFAM" id="SSF143800">
    <property type="entry name" value="L28p-like"/>
    <property type="match status" value="1"/>
</dbReference>
<feature type="chain" id="PRO_1000007235" description="Large ribosomal subunit protein bL28">
    <location>
        <begin position="1"/>
        <end position="78"/>
    </location>
</feature>
<gene>
    <name evidence="1" type="primary">rpmB</name>
    <name type="ordered locus">FP1433</name>
</gene>
<name>RL28_FLAPJ</name>
<comment type="similarity">
    <text evidence="1">Belongs to the bacterial ribosomal protein bL28 family.</text>
</comment>
<protein>
    <recommendedName>
        <fullName evidence="1">Large ribosomal subunit protein bL28</fullName>
    </recommendedName>
    <alternativeName>
        <fullName evidence="2">50S ribosomal protein L28</fullName>
    </alternativeName>
</protein>